<name>EFTS_JANSC</name>
<organism>
    <name type="scientific">Jannaschia sp. (strain CCS1)</name>
    <dbReference type="NCBI Taxonomy" id="290400"/>
    <lineage>
        <taxon>Bacteria</taxon>
        <taxon>Pseudomonadati</taxon>
        <taxon>Pseudomonadota</taxon>
        <taxon>Alphaproteobacteria</taxon>
        <taxon>Rhodobacterales</taxon>
        <taxon>Roseobacteraceae</taxon>
        <taxon>Jannaschia</taxon>
    </lineage>
</organism>
<gene>
    <name evidence="1" type="primary">tsf</name>
    <name type="ordered locus">Jann_2305</name>
</gene>
<keyword id="KW-0963">Cytoplasm</keyword>
<keyword id="KW-0251">Elongation factor</keyword>
<keyword id="KW-0648">Protein biosynthesis</keyword>
<keyword id="KW-1185">Reference proteome</keyword>
<sequence length="291" mass="30261">MAITASMVKELRDTTGAGMMDAKKALTETDGDMDAAVDWLRTKGLAKAAKKSGRTAAEGLVAVAVSGSTGVAVEVNSETDFVGKNAEFQEMVAGIAQVALGADDTEALLAADMGGKSVADTVTAKVATIGENMGVRRMAKLEGDIVVSYVHNAAADGMGKIGVLIATKGGDAGFAKQVAMHVAAVNPASLDEASVDPEMVEKERQVQIDIARESGKPEQVIEKMIVGRMKKYLSEITLVNQAFVVNPDLTVGEAAKEASAEITGFVRLEVGEGIEKKVENFAEEVAKTAKG</sequence>
<feature type="chain" id="PRO_0000241488" description="Elongation factor Ts">
    <location>
        <begin position="1"/>
        <end position="291"/>
    </location>
</feature>
<feature type="region of interest" description="Involved in Mg(2+) ion dislocation from EF-Tu" evidence="1">
    <location>
        <begin position="79"/>
        <end position="82"/>
    </location>
</feature>
<comment type="function">
    <text evidence="1">Associates with the EF-Tu.GDP complex and induces the exchange of GDP to GTP. It remains bound to the aminoacyl-tRNA.EF-Tu.GTP complex up to the GTP hydrolysis stage on the ribosome.</text>
</comment>
<comment type="subcellular location">
    <subcellularLocation>
        <location evidence="1">Cytoplasm</location>
    </subcellularLocation>
</comment>
<comment type="similarity">
    <text evidence="1">Belongs to the EF-Ts family.</text>
</comment>
<accession>Q28PZ0</accession>
<reference key="1">
    <citation type="submission" date="2006-02" db="EMBL/GenBank/DDBJ databases">
        <title>Complete sequence of chromosome of Jannaschia sp. CCS1.</title>
        <authorList>
            <consortium name="US DOE Joint Genome Institute"/>
            <person name="Copeland A."/>
            <person name="Lucas S."/>
            <person name="Lapidus A."/>
            <person name="Barry K."/>
            <person name="Detter J.C."/>
            <person name="Glavina del Rio T."/>
            <person name="Hammon N."/>
            <person name="Israni S."/>
            <person name="Pitluck S."/>
            <person name="Brettin T."/>
            <person name="Bruce D."/>
            <person name="Han C."/>
            <person name="Tapia R."/>
            <person name="Gilna P."/>
            <person name="Chertkov O."/>
            <person name="Saunders E."/>
            <person name="Schmutz J."/>
            <person name="Larimer F."/>
            <person name="Land M."/>
            <person name="Kyrpides N."/>
            <person name="Lykidis A."/>
            <person name="Moran M.A."/>
            <person name="Belas R."/>
            <person name="Ye W."/>
            <person name="Buchan A."/>
            <person name="Gonzalez J.M."/>
            <person name="Schell M.A."/>
            <person name="Richardson P."/>
        </authorList>
    </citation>
    <scope>NUCLEOTIDE SEQUENCE [LARGE SCALE GENOMIC DNA]</scope>
    <source>
        <strain>CCS1</strain>
    </source>
</reference>
<dbReference type="EMBL" id="CP000264">
    <property type="protein sequence ID" value="ABD55222.1"/>
    <property type="molecule type" value="Genomic_DNA"/>
</dbReference>
<dbReference type="RefSeq" id="WP_011455426.1">
    <property type="nucleotide sequence ID" value="NC_007802.1"/>
</dbReference>
<dbReference type="SMR" id="Q28PZ0"/>
<dbReference type="STRING" id="290400.Jann_2305"/>
<dbReference type="KEGG" id="jan:Jann_2305"/>
<dbReference type="eggNOG" id="COG0264">
    <property type="taxonomic scope" value="Bacteria"/>
</dbReference>
<dbReference type="HOGENOM" id="CLU_047155_2_0_5"/>
<dbReference type="OrthoDB" id="9808348at2"/>
<dbReference type="Proteomes" id="UP000008326">
    <property type="component" value="Chromosome"/>
</dbReference>
<dbReference type="GO" id="GO:0005737">
    <property type="term" value="C:cytoplasm"/>
    <property type="evidence" value="ECO:0007669"/>
    <property type="project" value="UniProtKB-SubCell"/>
</dbReference>
<dbReference type="GO" id="GO:0003746">
    <property type="term" value="F:translation elongation factor activity"/>
    <property type="evidence" value="ECO:0007669"/>
    <property type="project" value="UniProtKB-UniRule"/>
</dbReference>
<dbReference type="CDD" id="cd14275">
    <property type="entry name" value="UBA_EF-Ts"/>
    <property type="match status" value="1"/>
</dbReference>
<dbReference type="FunFam" id="1.10.286.20:FF:000001">
    <property type="entry name" value="Elongation factor Ts"/>
    <property type="match status" value="1"/>
</dbReference>
<dbReference type="FunFam" id="1.10.8.10:FF:000001">
    <property type="entry name" value="Elongation factor Ts"/>
    <property type="match status" value="1"/>
</dbReference>
<dbReference type="Gene3D" id="1.10.286.20">
    <property type="match status" value="1"/>
</dbReference>
<dbReference type="Gene3D" id="1.10.8.10">
    <property type="entry name" value="DNA helicase RuvA subunit, C-terminal domain"/>
    <property type="match status" value="1"/>
</dbReference>
<dbReference type="Gene3D" id="3.30.479.20">
    <property type="entry name" value="Elongation factor Ts, dimerisation domain"/>
    <property type="match status" value="2"/>
</dbReference>
<dbReference type="HAMAP" id="MF_00050">
    <property type="entry name" value="EF_Ts"/>
    <property type="match status" value="1"/>
</dbReference>
<dbReference type="InterPro" id="IPR036402">
    <property type="entry name" value="EF-Ts_dimer_sf"/>
</dbReference>
<dbReference type="InterPro" id="IPR001816">
    <property type="entry name" value="Transl_elong_EFTs/EF1B"/>
</dbReference>
<dbReference type="InterPro" id="IPR014039">
    <property type="entry name" value="Transl_elong_EFTs/EF1B_dimer"/>
</dbReference>
<dbReference type="InterPro" id="IPR018101">
    <property type="entry name" value="Transl_elong_Ts_CS"/>
</dbReference>
<dbReference type="InterPro" id="IPR009060">
    <property type="entry name" value="UBA-like_sf"/>
</dbReference>
<dbReference type="NCBIfam" id="TIGR00116">
    <property type="entry name" value="tsf"/>
    <property type="match status" value="1"/>
</dbReference>
<dbReference type="PANTHER" id="PTHR11741">
    <property type="entry name" value="ELONGATION FACTOR TS"/>
    <property type="match status" value="1"/>
</dbReference>
<dbReference type="PANTHER" id="PTHR11741:SF0">
    <property type="entry name" value="ELONGATION FACTOR TS, MITOCHONDRIAL"/>
    <property type="match status" value="1"/>
</dbReference>
<dbReference type="Pfam" id="PF00889">
    <property type="entry name" value="EF_TS"/>
    <property type="match status" value="1"/>
</dbReference>
<dbReference type="SUPFAM" id="SSF54713">
    <property type="entry name" value="Elongation factor Ts (EF-Ts), dimerisation domain"/>
    <property type="match status" value="2"/>
</dbReference>
<dbReference type="SUPFAM" id="SSF46934">
    <property type="entry name" value="UBA-like"/>
    <property type="match status" value="1"/>
</dbReference>
<dbReference type="PROSITE" id="PS01126">
    <property type="entry name" value="EF_TS_1"/>
    <property type="match status" value="1"/>
</dbReference>
<proteinExistence type="inferred from homology"/>
<evidence type="ECO:0000255" key="1">
    <source>
        <dbReference type="HAMAP-Rule" id="MF_00050"/>
    </source>
</evidence>
<protein>
    <recommendedName>
        <fullName evidence="1">Elongation factor Ts</fullName>
        <shortName evidence="1">EF-Ts</shortName>
    </recommendedName>
</protein>